<evidence type="ECO:0000250" key="1">
    <source>
        <dbReference type="UniProtKB" id="D4GWB3"/>
    </source>
</evidence>
<evidence type="ECO:0000305" key="2"/>
<comment type="function">
    <text evidence="1">Zinc-binding protein that binds only one zinc ion.</text>
</comment>
<comment type="subunit">
    <text evidence="1">Monomer in solution.</text>
</comment>
<comment type="domain">
    <text evidence="1">Contains four C(P)XCG motifs, suggesting the presence of two zinc binding pockets (ZBPs), but only ZBP2 (comprised of C(P)XCG motifs 2 and 4) is occupied by zinc.</text>
</comment>
<protein>
    <recommendedName>
        <fullName evidence="2">Zinc finger protein MJ0458.1</fullName>
    </recommendedName>
</protein>
<feature type="chain" id="PRO_0000106887" description="Zinc finger protein MJ0458.1">
    <location>
        <begin position="1"/>
        <end position="57"/>
    </location>
</feature>
<feature type="short sequence motif" description="C(P)XCG motif 1" evidence="1">
    <location>
        <begin position="8"/>
        <end position="12"/>
    </location>
</feature>
<feature type="short sequence motif" description="C(P)XCG motif 2" evidence="1">
    <location>
        <begin position="26"/>
        <end position="30"/>
    </location>
</feature>
<feature type="short sequence motif" description="C(P)XCG motif 3" evidence="1">
    <location>
        <begin position="37"/>
        <end position="41"/>
    </location>
</feature>
<feature type="short sequence motif" description="C(P)XCG motif 4" evidence="1">
    <location>
        <begin position="49"/>
        <end position="53"/>
    </location>
</feature>
<feature type="binding site" evidence="1">
    <location>
        <position position="26"/>
    </location>
    <ligand>
        <name>Zn(2+)</name>
        <dbReference type="ChEBI" id="CHEBI:29105"/>
    </ligand>
</feature>
<feature type="binding site" evidence="1">
    <location>
        <position position="29"/>
    </location>
    <ligand>
        <name>Zn(2+)</name>
        <dbReference type="ChEBI" id="CHEBI:29105"/>
    </ligand>
</feature>
<feature type="binding site" evidence="1">
    <location>
        <position position="49"/>
    </location>
    <ligand>
        <name>Zn(2+)</name>
        <dbReference type="ChEBI" id="CHEBI:29105"/>
    </ligand>
</feature>
<feature type="binding site" evidence="1">
    <location>
        <position position="52"/>
    </location>
    <ligand>
        <name>Zn(2+)</name>
        <dbReference type="ChEBI" id="CHEBI:29105"/>
    </ligand>
</feature>
<name>Z458A_METJA</name>
<proteinExistence type="inferred from homology"/>
<sequence>MGEMKYVCISCNAEIAPREKSTKFPCPNCGEVEIVRCERCRKLNNPYKCPKCGFEGP</sequence>
<reference key="1">
    <citation type="journal article" date="1996" name="Science">
        <title>Complete genome sequence of the methanogenic archaeon, Methanococcus jannaschii.</title>
        <authorList>
            <person name="Bult C.J."/>
            <person name="White O."/>
            <person name="Olsen G.J."/>
            <person name="Zhou L."/>
            <person name="Fleischmann R.D."/>
            <person name="Sutton G.G."/>
            <person name="Blake J.A."/>
            <person name="FitzGerald L.M."/>
            <person name="Clayton R.A."/>
            <person name="Gocayne J.D."/>
            <person name="Kerlavage A.R."/>
            <person name="Dougherty B.A."/>
            <person name="Tomb J.-F."/>
            <person name="Adams M.D."/>
            <person name="Reich C.I."/>
            <person name="Overbeek R."/>
            <person name="Kirkness E.F."/>
            <person name="Weinstock K.G."/>
            <person name="Merrick J.M."/>
            <person name="Glodek A."/>
            <person name="Scott J.L."/>
            <person name="Geoghagen N.S.M."/>
            <person name="Weidman J.F."/>
            <person name="Fuhrmann J.L."/>
            <person name="Nguyen D."/>
            <person name="Utterback T.R."/>
            <person name="Kelley J.M."/>
            <person name="Peterson J.D."/>
            <person name="Sadow P.W."/>
            <person name="Hanna M.C."/>
            <person name="Cotton M.D."/>
            <person name="Roberts K.M."/>
            <person name="Hurst M.A."/>
            <person name="Kaine B.P."/>
            <person name="Borodovsky M."/>
            <person name="Klenk H.-P."/>
            <person name="Fraser C.M."/>
            <person name="Smith H.O."/>
            <person name="Woese C.R."/>
            <person name="Venter J.C."/>
        </authorList>
    </citation>
    <scope>NUCLEOTIDE SEQUENCE [LARGE SCALE GENOMIC DNA]</scope>
    <source>
        <strain>ATCC 43067 / DSM 2661 / JAL-1 / JCM 10045 / NBRC 100440</strain>
    </source>
</reference>
<gene>
    <name type="ordered locus">MJ0458.1</name>
</gene>
<keyword id="KW-0479">Metal-binding</keyword>
<keyword id="KW-1185">Reference proteome</keyword>
<keyword id="KW-0862">Zinc</keyword>
<accession>P81308</accession>
<dbReference type="EMBL" id="L77117">
    <property type="protein sequence ID" value="AAB98468.1"/>
    <property type="molecule type" value="Genomic_DNA"/>
</dbReference>
<dbReference type="SMR" id="P81308"/>
<dbReference type="FunCoup" id="P81308">
    <property type="interactions" value="115"/>
</dbReference>
<dbReference type="STRING" id="243232.MJ_0458.1"/>
<dbReference type="PaxDb" id="243232-MJ_0458.1"/>
<dbReference type="EnsemblBacteria" id="AAB98468">
    <property type="protein sequence ID" value="AAB98468"/>
    <property type="gene ID" value="MJ_0458.1"/>
</dbReference>
<dbReference type="KEGG" id="mja:MJ_0458.1"/>
<dbReference type="eggNOG" id="arCOG01989">
    <property type="taxonomic scope" value="Archaea"/>
</dbReference>
<dbReference type="HOGENOM" id="CLU_196471_1_0_2"/>
<dbReference type="InParanoid" id="P81308"/>
<dbReference type="PhylomeDB" id="P81308"/>
<dbReference type="Proteomes" id="UP000000805">
    <property type="component" value="Chromosome"/>
</dbReference>
<dbReference type="GO" id="GO:0046872">
    <property type="term" value="F:metal ion binding"/>
    <property type="evidence" value="ECO:0007669"/>
    <property type="project" value="UniProtKB-KW"/>
</dbReference>
<dbReference type="InterPro" id="IPR044720">
    <property type="entry name" value="HVO_2753-like"/>
</dbReference>
<dbReference type="InterPro" id="IPR011668">
    <property type="entry name" value="HVO_2753-like_ZBP"/>
</dbReference>
<dbReference type="NCBIfam" id="NF011481">
    <property type="entry name" value="PRK14890.1"/>
    <property type="match status" value="1"/>
</dbReference>
<dbReference type="PANTHER" id="PTHR40733:SF1">
    <property type="entry name" value="SMALL ZINC FINGER PROTEIN HVO-2753-LIKE ZINC-BINDING POCKET DOMAIN-CONTAINING PROTEIN"/>
    <property type="match status" value="1"/>
</dbReference>
<dbReference type="PANTHER" id="PTHR40733">
    <property type="entry name" value="ZINC-RIBBON RNA-BINDING PROTEIN INVOLVED IN TRANSLATION-RELATED"/>
    <property type="match status" value="1"/>
</dbReference>
<dbReference type="Pfam" id="PF07754">
    <property type="entry name" value="HVO_2753_ZBP"/>
    <property type="match status" value="1"/>
</dbReference>
<organism>
    <name type="scientific">Methanocaldococcus jannaschii (strain ATCC 43067 / DSM 2661 / JAL-1 / JCM 10045 / NBRC 100440)</name>
    <name type="common">Methanococcus jannaschii</name>
    <dbReference type="NCBI Taxonomy" id="243232"/>
    <lineage>
        <taxon>Archaea</taxon>
        <taxon>Methanobacteriati</taxon>
        <taxon>Methanobacteriota</taxon>
        <taxon>Methanomada group</taxon>
        <taxon>Methanococci</taxon>
        <taxon>Methanococcales</taxon>
        <taxon>Methanocaldococcaceae</taxon>
        <taxon>Methanocaldococcus</taxon>
    </lineage>
</organism>